<accession>Q8I395</accession>
<evidence type="ECO:0000250" key="1">
    <source>
        <dbReference type="UniProtKB" id="B0M0W2"/>
    </source>
</evidence>
<evidence type="ECO:0000250" key="2">
    <source>
        <dbReference type="UniProtKB" id="W7JUX6"/>
    </source>
</evidence>
<evidence type="ECO:0000255" key="3"/>
<evidence type="ECO:0000256" key="4">
    <source>
        <dbReference type="SAM" id="MobiDB-lite"/>
    </source>
</evidence>
<evidence type="ECO:0000269" key="5">
    <source>
    </source>
</evidence>
<evidence type="ECO:0000269" key="6">
    <source>
    </source>
</evidence>
<evidence type="ECO:0000269" key="7">
    <source>
    </source>
</evidence>
<evidence type="ECO:0000269" key="8">
    <source>
    </source>
</evidence>
<evidence type="ECO:0000303" key="9">
    <source>
    </source>
</evidence>
<evidence type="ECO:0000303" key="10">
    <source>
    </source>
</evidence>
<evidence type="ECO:0000305" key="11"/>
<evidence type="ECO:0000312" key="12">
    <source>
        <dbReference type="EMBL" id="CAD51739.1"/>
    </source>
</evidence>
<evidence type="ECO:0000312" key="13">
    <source>
        <dbReference type="Proteomes" id="UP000001450"/>
    </source>
</evidence>
<protein>
    <recommendedName>
        <fullName evidence="11">High molecular weight rhoptry protein 3</fullName>
    </recommendedName>
</protein>
<proteinExistence type="evidence at protein level"/>
<sequence length="897" mass="104856">MRSKHLVTLFIITFLSFSTVKVWGKDVFAGFVTKKLKTLLDCNFALYYNFKGNGPDAGSFLDFVDEPEQFYWFVEHFLSVKFRVPKHLKDKNIHNFTPCLNRSWVSEFLKEYEEPFVNPVMKFLDKEQRLFFTYNFGDVEPQGKYTYFPVKEFHKYCILPPLIKTNIKDGESGEFLKYQLNKEEYKVFLSSVGSQMTAIKNLYSTVEDEQRKQLLKVIIENESTNDISVQCPTYNIKLHYTKECANSNNILKCIDEFLRKTCEKKTESKHPSADLCEHLQFLFESLKNPYLDNFKKFMTNSDFTLIKPQSVWNVPIFDIYKPKNYLDSVQNLDTECFKKLNSKNLIFLSFHDDIPNNPYYNVELQEIVKLSTYTYSIFDKLYNFFFVFKKSGAPISPVSVKELSHNITDFSFKEDNSEIQCQNVRKSLDLEVDVETMKGIAAEKLCKIIEKFILTKDDASKPEKSDIHRGFRILCILISTHVEAYNIVRQLLNMESMISLTRYTSLYIHKFFKSVTLLKGNFLYKNNKAIRYSRACSKASLHVPSVLYRRNIYIPETFLSLYLGLSNLVSSNPSSPFFEYAIIEFLVTYYNKGSEKFVLYFISIISVLYINEYYYEQLSCFYPKEFELIKSRMIHPNIVDRILKGIDNLMKSTRYDKMRTMYLDFESSDIFSREKVFTALYNFDSFIKTNEQLKKKNLEEISEIPVQLETSNDGIGYRKQDVLYETDKPQTMDEASYEETVDEDAHHVNEKQHSAHFLDAIAEKDILEEKTKDQDLEIELYKYMGPLKEQSKSTSAASTSDEISGSEGPSTESTSTGNQGEDKTTDNTYKEMEELEEAEGTSNLKKGLEFYKSSLKLDQLDKEKPKKKKSKRKKKRDSSSDRILLEESKTFTSENEL</sequence>
<comment type="function">
    <text evidence="6 7">Participates in the formation of new permeability pathways in Plasmodium-infected erythrocytes enabling the uptake of nutrients from the blood plasma (PubMed:28252384). Required for maintaining invasion capacity of merozoites (PubMed:28252384, PubMed:33024030). Required for the trophozoite to schizont developmental transition of the intracellular parasite (PubMed:28252384).</text>
</comment>
<comment type="subunit">
    <text evidence="1 5 6 7 8">Component of the RhopH complex (PubMed:28252383, PubMed:28252384, PubMed:35393572). RhopH complex is composed of CLAG3.1/CLAG3.2, RhopH2 and RhopH3 with a 1:1:1 subunit stoichiometry (By similarity). Interacts with CLAG3.1/CLAG3.2 (PubMed:33024030). Interacts with CDPK1; the interaction promotes RhopH3 phosphorylation in merozoites (PubMed:33024030).</text>
</comment>
<comment type="subcellular location">
    <subcellularLocation>
        <location evidence="1">Host cell membrane</location>
        <topology evidence="3">Single-pass membrane protein</topology>
    </subcellularLocation>
    <subcellularLocation>
        <location evidence="8">Host cell membrane</location>
        <topology evidence="11">Peripheral membrane protein</topology>
    </subcellularLocation>
    <subcellularLocation>
        <location evidence="8">Parasitophorous vacuole membrane</location>
        <topology evidence="11">Peripheral membrane protein</topology>
    </subcellularLocation>
    <subcellularLocation>
        <location evidence="8">Cytoplasm</location>
    </subcellularLocation>
    <subcellularLocation>
        <location evidence="5 6 7 8">Cytoplasmic vesicle</location>
        <location evidence="5 6 7 8">Secretory vesicle</location>
        <location evidence="5 6 7 8">Rhoptry</location>
    </subcellularLocation>
    <text evidence="1">Export to host cytosol is mediated by the Plasmodium translocon of exported proteins (PTEX) complex.</text>
</comment>
<comment type="developmental stage">
    <text evidence="6 8">Expressed in merozoites (at protein level) (PubMed:28252384, PubMed:35393572). Expressed in ring-stage parasites (at protein level) (PubMed:35393572). Expressed in trophozoites (at protein level) (PubMed:35393572). Expressed in developing schizonts (at protein level) (PubMed:28252384, PubMed:35393572).</text>
</comment>
<comment type="PTM">
    <text evidence="1">Proteolytically cleaved near C-terminus.</text>
</comment>
<comment type="disruption phenotype">
    <text evidence="6">Conditional knockdown results in the loss of rhoptry localization of both CLAG3.1 and RhopH2 in mature schizonts (PubMed:28252384). Decreased long-term parasite viability (PubMed:28252384). Decreased merozoite invasion capacity (PubMed:28252384). Developmental block at trophozoite stage in cycle 2 (PubMed:28252384). Resistance of infected erythrocytes to sorbitol lysis and decreased uptake of 5-aminolevulinic acid by infected erythrocytes, indicating defects in the formation of new permeability pathways (PubMed:28252384). No significant effects on parasite egress from the host erythrocyte (PubMed:28252384). No significant effects on protein export from the intracellular parasite (PubMed:28252384).</text>
</comment>
<dbReference type="EMBL" id="AL844508">
    <property type="protein sequence ID" value="CAD51739.1"/>
    <property type="molecule type" value="Genomic_DNA"/>
</dbReference>
<dbReference type="RefSeq" id="XP_001351928.1">
    <property type="nucleotide sequence ID" value="XM_001351892.1"/>
</dbReference>
<dbReference type="SMR" id="Q8I395"/>
<dbReference type="FunCoup" id="Q8I395">
    <property type="interactions" value="73"/>
</dbReference>
<dbReference type="IntAct" id="Q8I395">
    <property type="interactions" value="4"/>
</dbReference>
<dbReference type="STRING" id="5833.PFI0265c"/>
<dbReference type="SwissPalm" id="Q8I395"/>
<dbReference type="PaxDb" id="5833-PFI0265c"/>
<dbReference type="EnsemblProtists" id="CAD51739">
    <property type="protein sequence ID" value="CAD51739"/>
    <property type="gene ID" value="PF3D7_0905400"/>
</dbReference>
<dbReference type="GeneID" id="813333"/>
<dbReference type="KEGG" id="pfa:PF3D7_0905400"/>
<dbReference type="VEuPathDB" id="PlasmoDB:PF3D7_0905400"/>
<dbReference type="HOGENOM" id="CLU_325574_0_0_1"/>
<dbReference type="InParanoid" id="Q8I395"/>
<dbReference type="OMA" id="GEPEQFY"/>
<dbReference type="OrthoDB" id="392048at2759"/>
<dbReference type="PhylomeDB" id="Q8I395"/>
<dbReference type="Proteomes" id="UP000001450">
    <property type="component" value="Chromosome 9"/>
</dbReference>
<dbReference type="GO" id="GO:0031410">
    <property type="term" value="C:cytoplasmic vesicle"/>
    <property type="evidence" value="ECO:0007669"/>
    <property type="project" value="UniProtKB-KW"/>
</dbReference>
<dbReference type="GO" id="GO:0005576">
    <property type="term" value="C:extracellular region"/>
    <property type="evidence" value="ECO:0000314"/>
    <property type="project" value="UniProtKB"/>
</dbReference>
<dbReference type="GO" id="GO:0020002">
    <property type="term" value="C:host cell plasma membrane"/>
    <property type="evidence" value="ECO:0007669"/>
    <property type="project" value="UniProtKB-SubCell"/>
</dbReference>
<dbReference type="GO" id="GO:0005886">
    <property type="term" value="C:plasma membrane"/>
    <property type="evidence" value="ECO:0000314"/>
    <property type="project" value="UniProtKB"/>
</dbReference>
<dbReference type="GO" id="GO:0020008">
    <property type="term" value="C:rhoptry"/>
    <property type="evidence" value="ECO:0000314"/>
    <property type="project" value="UniProtKB"/>
</dbReference>
<dbReference type="GO" id="GO:0020005">
    <property type="term" value="C:symbiont-containing vacuole membrane"/>
    <property type="evidence" value="ECO:0007669"/>
    <property type="project" value="UniProtKB-SubCell"/>
</dbReference>
<dbReference type="GO" id="GO:0085017">
    <property type="term" value="P:entry into host cell by a symbiont-containing vacuole"/>
    <property type="evidence" value="ECO:0000314"/>
    <property type="project" value="UniProtKB"/>
</dbReference>
<dbReference type="GO" id="GO:0044409">
    <property type="term" value="P:symbiont entry into host"/>
    <property type="evidence" value="ECO:0000315"/>
    <property type="project" value="GeneDB"/>
</dbReference>
<dbReference type="InterPro" id="IPR054451">
    <property type="entry name" value="RhopH3_C"/>
</dbReference>
<dbReference type="Pfam" id="PF22808">
    <property type="entry name" value="RhopH3_C"/>
    <property type="match status" value="1"/>
</dbReference>
<organism evidence="13">
    <name type="scientific">Plasmodium falciparum (isolate 3D7)</name>
    <dbReference type="NCBI Taxonomy" id="36329"/>
    <lineage>
        <taxon>Eukaryota</taxon>
        <taxon>Sar</taxon>
        <taxon>Alveolata</taxon>
        <taxon>Apicomplexa</taxon>
        <taxon>Aconoidasida</taxon>
        <taxon>Haemosporida</taxon>
        <taxon>Plasmodiidae</taxon>
        <taxon>Plasmodium</taxon>
        <taxon>Plasmodium (Laverania)</taxon>
    </lineage>
</organism>
<reference evidence="13" key="1">
    <citation type="journal article" date="2002" name="Nature">
        <title>Genome sequence of the human malaria parasite Plasmodium falciparum.</title>
        <authorList>
            <person name="Gardner M.J."/>
            <person name="Hall N."/>
            <person name="Fung E."/>
            <person name="White O."/>
            <person name="Berriman M."/>
            <person name="Hyman R.W."/>
            <person name="Carlton J.M."/>
            <person name="Pain A."/>
            <person name="Nelson K.E."/>
            <person name="Bowman S."/>
            <person name="Paulsen I.T."/>
            <person name="James K.D."/>
            <person name="Eisen J.A."/>
            <person name="Rutherford K.M."/>
            <person name="Salzberg S.L."/>
            <person name="Craig A."/>
            <person name="Kyes S."/>
            <person name="Chan M.-S."/>
            <person name="Nene V."/>
            <person name="Shallom S.J."/>
            <person name="Suh B."/>
            <person name="Peterson J."/>
            <person name="Angiuoli S."/>
            <person name="Pertea M."/>
            <person name="Allen J."/>
            <person name="Selengut J."/>
            <person name="Haft D."/>
            <person name="Mather M.W."/>
            <person name="Vaidya A.B."/>
            <person name="Martin D.M.A."/>
            <person name="Fairlamb A.H."/>
            <person name="Fraunholz M.J."/>
            <person name="Roos D.S."/>
            <person name="Ralph S.A."/>
            <person name="McFadden G.I."/>
            <person name="Cummings L.M."/>
            <person name="Subramanian G.M."/>
            <person name="Mungall C."/>
            <person name="Venter J.C."/>
            <person name="Carucci D.J."/>
            <person name="Hoffman S.L."/>
            <person name="Newbold C."/>
            <person name="Davis R.W."/>
            <person name="Fraser C.M."/>
            <person name="Barrell B.G."/>
        </authorList>
    </citation>
    <scope>NUCLEOTIDE SEQUENCE [LARGE SCALE GENOMIC DNA]</scope>
    <source>
        <strain evidence="13">3D7</strain>
    </source>
</reference>
<reference evidence="13" key="2">
    <citation type="journal article" date="2002" name="Nature">
        <title>Sequence of Plasmodium falciparum chromosomes 1, 3-9 and 13.</title>
        <authorList>
            <person name="Hall N."/>
            <person name="Pain A."/>
            <person name="Berriman M."/>
            <person name="Churcher C.M."/>
            <person name="Harris B."/>
            <person name="Harris D."/>
            <person name="Mungall K.L."/>
            <person name="Bowman S."/>
            <person name="Atkin R."/>
            <person name="Baker S."/>
            <person name="Barron A."/>
            <person name="Brooks K."/>
            <person name="Buckee C.O."/>
            <person name="Burrows C."/>
            <person name="Cherevach I."/>
            <person name="Chillingworth C."/>
            <person name="Chillingworth T."/>
            <person name="Christodoulou Z."/>
            <person name="Clark L."/>
            <person name="Clark R."/>
            <person name="Corton C."/>
            <person name="Cronin A."/>
            <person name="Davies R.M."/>
            <person name="Davis P."/>
            <person name="Dear P."/>
            <person name="Dearden F."/>
            <person name="Doggett J."/>
            <person name="Feltwell T."/>
            <person name="Goble A."/>
            <person name="Goodhead I."/>
            <person name="Gwilliam R."/>
            <person name="Hamlin N."/>
            <person name="Hance Z."/>
            <person name="Harper D."/>
            <person name="Hauser H."/>
            <person name="Hornsby T."/>
            <person name="Holroyd S."/>
            <person name="Horrocks P."/>
            <person name="Humphray S."/>
            <person name="Jagels K."/>
            <person name="James K.D."/>
            <person name="Johnson D."/>
            <person name="Kerhornou A."/>
            <person name="Knights A."/>
            <person name="Konfortov B."/>
            <person name="Kyes S."/>
            <person name="Larke N."/>
            <person name="Lawson D."/>
            <person name="Lennard N."/>
            <person name="Line A."/>
            <person name="Maddison M."/>
            <person name="Mclean J."/>
            <person name="Mooney P."/>
            <person name="Moule S."/>
            <person name="Murphy L."/>
            <person name="Oliver K."/>
            <person name="Ormond D."/>
            <person name="Price C."/>
            <person name="Quail M.A."/>
            <person name="Rabbinowitsch E."/>
            <person name="Rajandream M.A."/>
            <person name="Rutter S."/>
            <person name="Rutherford K.M."/>
            <person name="Sanders M."/>
            <person name="Simmonds M."/>
            <person name="Seeger K."/>
            <person name="Sharp S."/>
            <person name="Smith R."/>
            <person name="Squares R."/>
            <person name="Squares S."/>
            <person name="Stevens K."/>
            <person name="Taylor K."/>
            <person name="Tivey A."/>
            <person name="Unwin L."/>
            <person name="Whitehead S."/>
            <person name="Woodward J.R."/>
            <person name="Sulston J.E."/>
            <person name="Craig A."/>
            <person name="Newbold C."/>
            <person name="Barrell B.G."/>
        </authorList>
    </citation>
    <scope>NUCLEOTIDE SEQUENCE [LARGE SCALE GENOMIC DNA]</scope>
    <source>
        <strain evidence="13">3D7</strain>
    </source>
</reference>
<reference evidence="11" key="3">
    <citation type="journal article" date="2017" name="Elife">
        <title>Plasmodium falciparum parasites deploy RhopH2 into the host erythrocyte to obtain nutrients, grow and replicate.</title>
        <authorList>
            <person name="Counihan N.A."/>
            <person name="Chisholm S.A."/>
            <person name="Bullen H.E."/>
            <person name="Srivastava A."/>
            <person name="Sanders P.R."/>
            <person name="Jonsdottir T.K."/>
            <person name="Weiss G.E."/>
            <person name="Ghosh S."/>
            <person name="Crabb B.S."/>
            <person name="Creek D.J."/>
            <person name="Gilson P.R."/>
            <person name="de Koning-Ward T.F."/>
        </authorList>
    </citation>
    <scope>SUBUNIT</scope>
    <scope>SUBCELLULAR LOCATION</scope>
    <source>
        <strain evidence="9">3D7</strain>
    </source>
</reference>
<reference evidence="11" key="4">
    <citation type="journal article" date="2017" name="Elife">
        <title>The Plasmodium falciparum rhoptry protein RhopH3 plays essential roles in host cell invasion and nutrient uptake.</title>
        <authorList>
            <person name="Sherling E.S."/>
            <person name="Knuepfer E."/>
            <person name="Brzostowski J.A."/>
            <person name="Miller L.H."/>
            <person name="Blackman M.J."/>
            <person name="van Ooij C."/>
        </authorList>
    </citation>
    <scope>FUNCTION</scope>
    <scope>SUBUNIT</scope>
    <scope>SUBCELLULAR LOCATION</scope>
    <scope>DEVELOPMENTAL STAGE</scope>
    <scope>DISRUPTION PHENOTYPE</scope>
</reference>
<reference evidence="11" key="5">
    <citation type="journal article" date="2020" name="MBio">
        <title>Phosphorylation of Rhoptry Protein RhopH3 Is Critical for Host Cell Invasion by the Malaria Parasite.</title>
        <authorList>
            <person name="Ekka R."/>
            <person name="Gupta A."/>
            <person name="Bhatnagar S."/>
            <person name="Malhotra P."/>
            <person name="Sharma P."/>
        </authorList>
    </citation>
    <scope>FUNCTION</scope>
    <scope>INTERACTION WITH CLAG3.1/CLAG3.2 AND CDPK1</scope>
    <scope>SUBCELLULAR LOCATION</scope>
    <scope>PHOSPHORYLATION AT SER-804</scope>
    <scope>MUTAGENESIS OF SER-804</scope>
</reference>
<reference evidence="11" key="6">
    <citation type="journal article" date="2022" name="Commun. Biol.">
        <title>RhopH2 and RhopH3 export enables assembly of the RhopH complex on P. falciparum-infected erythrocyte membranes.</title>
        <authorList>
            <person name="Pasternak M."/>
            <person name="Verhoef J.M.J."/>
            <person name="Wong W."/>
            <person name="Triglia T."/>
            <person name="Mlodzianoski M.J."/>
            <person name="Geoghegan N."/>
            <person name="Evelyn C."/>
            <person name="Wardak A.Z."/>
            <person name="Rogers K."/>
            <person name="Cowman A.F."/>
        </authorList>
    </citation>
    <scope>MASS SPECTROMETRY</scope>
    <scope>IDENTIFICATION IN RHOPH COMPLEX</scope>
    <scope>SUBCELLULAR LOCATION</scope>
    <scope>DEVELOPMENTAL STAGE</scope>
    <source>
        <strain evidence="10">3D7</strain>
    </source>
</reference>
<gene>
    <name evidence="9 10" type="primary">RhopH3</name>
    <name evidence="12" type="ORF">PF3D7_0905400</name>
</gene>
<feature type="signal peptide" evidence="3">
    <location>
        <begin position="1"/>
        <end position="24"/>
    </location>
</feature>
<feature type="chain" id="PRO_5004307860" description="High molecular weight rhoptry protein 3" evidence="3">
    <location>
        <begin position="25"/>
        <end position="897"/>
    </location>
</feature>
<feature type="transmembrane region" description="Helical" evidence="3">
    <location>
        <begin position="597"/>
        <end position="615"/>
    </location>
</feature>
<feature type="region of interest" description="Disordered" evidence="4">
    <location>
        <begin position="788"/>
        <end position="845"/>
    </location>
</feature>
<feature type="region of interest" description="Disordered" evidence="4">
    <location>
        <begin position="859"/>
        <end position="897"/>
    </location>
</feature>
<feature type="compositionally biased region" description="Polar residues" evidence="4">
    <location>
        <begin position="792"/>
        <end position="801"/>
    </location>
</feature>
<feature type="compositionally biased region" description="Low complexity" evidence="4">
    <location>
        <begin position="802"/>
        <end position="817"/>
    </location>
</feature>
<feature type="compositionally biased region" description="Basic and acidic residues" evidence="4">
    <location>
        <begin position="820"/>
        <end position="832"/>
    </location>
</feature>
<feature type="compositionally biased region" description="Basic residues" evidence="4">
    <location>
        <begin position="865"/>
        <end position="876"/>
    </location>
</feature>
<feature type="compositionally biased region" description="Basic and acidic residues" evidence="4">
    <location>
        <begin position="877"/>
        <end position="889"/>
    </location>
</feature>
<feature type="modified residue" description="Phosphoserine; by CDPK1" evidence="7">
    <location>
        <position position="804"/>
    </location>
</feature>
<feature type="disulfide bond" evidence="2">
    <location>
        <begin position="157"/>
        <end position="231"/>
    </location>
</feature>
<feature type="disulfide bond" evidence="2">
    <location>
        <begin position="244"/>
        <end position="253"/>
    </location>
</feature>
<feature type="disulfide bond" evidence="2">
    <location>
        <begin position="262"/>
        <end position="276"/>
    </location>
</feature>
<feature type="disulfide bond" evidence="2">
    <location>
        <begin position="421"/>
        <end position="620"/>
    </location>
</feature>
<feature type="disulfide bond" evidence="2">
    <location>
        <begin position="475"/>
        <end position="536"/>
    </location>
</feature>
<feature type="mutagenesis site" description="Abolishes phosphorylation. Results in protein mislocalization from the rhoptries to the cytoplasm, decreased secretion from the rhoptries and invasion defects in merozoites." evidence="7">
    <original>S</original>
    <variation>A</variation>
    <location>
        <position position="804"/>
    </location>
</feature>
<name>RCH3_PLAF7</name>
<keyword id="KW-0963">Cytoplasm</keyword>
<keyword id="KW-0968">Cytoplasmic vesicle</keyword>
<keyword id="KW-1015">Disulfide bond</keyword>
<keyword id="KW-1032">Host cell membrane</keyword>
<keyword id="KW-1043">Host membrane</keyword>
<keyword id="KW-0472">Membrane</keyword>
<keyword id="KW-0597">Phosphoprotein</keyword>
<keyword id="KW-1185">Reference proteome</keyword>
<keyword id="KW-0732">Signal</keyword>
<keyword id="KW-0812">Transmembrane</keyword>
<keyword id="KW-1133">Transmembrane helix</keyword>
<keyword id="KW-0813">Transport</keyword>